<organism>
    <name type="scientific">Salmonella schwarzengrund (strain CVM19633)</name>
    <dbReference type="NCBI Taxonomy" id="439843"/>
    <lineage>
        <taxon>Bacteria</taxon>
        <taxon>Pseudomonadati</taxon>
        <taxon>Pseudomonadota</taxon>
        <taxon>Gammaproteobacteria</taxon>
        <taxon>Enterobacterales</taxon>
        <taxon>Enterobacteriaceae</taxon>
        <taxon>Salmonella</taxon>
    </lineage>
</organism>
<name>SYY_SALSV</name>
<protein>
    <recommendedName>
        <fullName evidence="1">Tyrosine--tRNA ligase</fullName>
        <ecNumber evidence="1">6.1.1.1</ecNumber>
    </recommendedName>
    <alternativeName>
        <fullName evidence="1">Tyrosyl-tRNA synthetase</fullName>
        <shortName evidence="1">TyrRS</shortName>
    </alternativeName>
</protein>
<proteinExistence type="inferred from homology"/>
<gene>
    <name evidence="1" type="primary">tyrS</name>
    <name type="ordered locus">SeSA_A1546</name>
</gene>
<dbReference type="EC" id="6.1.1.1" evidence="1"/>
<dbReference type="EMBL" id="CP001127">
    <property type="protein sequence ID" value="ACF90235.1"/>
    <property type="molecule type" value="Genomic_DNA"/>
</dbReference>
<dbReference type="RefSeq" id="WP_000168626.1">
    <property type="nucleotide sequence ID" value="NC_011094.1"/>
</dbReference>
<dbReference type="SMR" id="B4TV08"/>
<dbReference type="KEGG" id="sew:SeSA_A1546"/>
<dbReference type="HOGENOM" id="CLU_024003_0_3_6"/>
<dbReference type="Proteomes" id="UP000001865">
    <property type="component" value="Chromosome"/>
</dbReference>
<dbReference type="GO" id="GO:0005829">
    <property type="term" value="C:cytosol"/>
    <property type="evidence" value="ECO:0007669"/>
    <property type="project" value="TreeGrafter"/>
</dbReference>
<dbReference type="GO" id="GO:0005524">
    <property type="term" value="F:ATP binding"/>
    <property type="evidence" value="ECO:0007669"/>
    <property type="project" value="UniProtKB-UniRule"/>
</dbReference>
<dbReference type="GO" id="GO:0003723">
    <property type="term" value="F:RNA binding"/>
    <property type="evidence" value="ECO:0007669"/>
    <property type="project" value="UniProtKB-KW"/>
</dbReference>
<dbReference type="GO" id="GO:0004831">
    <property type="term" value="F:tyrosine-tRNA ligase activity"/>
    <property type="evidence" value="ECO:0007669"/>
    <property type="project" value="UniProtKB-UniRule"/>
</dbReference>
<dbReference type="GO" id="GO:0006437">
    <property type="term" value="P:tyrosyl-tRNA aminoacylation"/>
    <property type="evidence" value="ECO:0007669"/>
    <property type="project" value="UniProtKB-UniRule"/>
</dbReference>
<dbReference type="CDD" id="cd00165">
    <property type="entry name" value="S4"/>
    <property type="match status" value="1"/>
</dbReference>
<dbReference type="CDD" id="cd00805">
    <property type="entry name" value="TyrRS_core"/>
    <property type="match status" value="1"/>
</dbReference>
<dbReference type="FunFam" id="1.10.240.10:FF:000001">
    <property type="entry name" value="Tyrosine--tRNA ligase"/>
    <property type="match status" value="1"/>
</dbReference>
<dbReference type="FunFam" id="3.10.290.10:FF:000007">
    <property type="entry name" value="Tyrosine--tRNA ligase"/>
    <property type="match status" value="1"/>
</dbReference>
<dbReference type="FunFam" id="3.40.50.620:FF:000008">
    <property type="entry name" value="Tyrosine--tRNA ligase"/>
    <property type="match status" value="1"/>
</dbReference>
<dbReference type="Gene3D" id="3.40.50.620">
    <property type="entry name" value="HUPs"/>
    <property type="match status" value="1"/>
</dbReference>
<dbReference type="Gene3D" id="3.10.290.10">
    <property type="entry name" value="RNA-binding S4 domain"/>
    <property type="match status" value="1"/>
</dbReference>
<dbReference type="Gene3D" id="1.10.240.10">
    <property type="entry name" value="Tyrosyl-Transfer RNA Synthetase"/>
    <property type="match status" value="1"/>
</dbReference>
<dbReference type="HAMAP" id="MF_02006">
    <property type="entry name" value="Tyr_tRNA_synth_type1"/>
    <property type="match status" value="1"/>
</dbReference>
<dbReference type="InterPro" id="IPR001412">
    <property type="entry name" value="aa-tRNA-synth_I_CS"/>
</dbReference>
<dbReference type="InterPro" id="IPR002305">
    <property type="entry name" value="aa-tRNA-synth_Ic"/>
</dbReference>
<dbReference type="InterPro" id="IPR014729">
    <property type="entry name" value="Rossmann-like_a/b/a_fold"/>
</dbReference>
<dbReference type="InterPro" id="IPR002942">
    <property type="entry name" value="S4_RNA-bd"/>
</dbReference>
<dbReference type="InterPro" id="IPR036986">
    <property type="entry name" value="S4_RNA-bd_sf"/>
</dbReference>
<dbReference type="InterPro" id="IPR054608">
    <property type="entry name" value="SYY-like_C"/>
</dbReference>
<dbReference type="InterPro" id="IPR002307">
    <property type="entry name" value="Tyr-tRNA-ligase"/>
</dbReference>
<dbReference type="InterPro" id="IPR024088">
    <property type="entry name" value="Tyr-tRNA-ligase_bac-type"/>
</dbReference>
<dbReference type="InterPro" id="IPR024107">
    <property type="entry name" value="Tyr-tRNA-ligase_bac_1"/>
</dbReference>
<dbReference type="NCBIfam" id="TIGR00234">
    <property type="entry name" value="tyrS"/>
    <property type="match status" value="1"/>
</dbReference>
<dbReference type="PANTHER" id="PTHR11766:SF0">
    <property type="entry name" value="TYROSINE--TRNA LIGASE, MITOCHONDRIAL"/>
    <property type="match status" value="1"/>
</dbReference>
<dbReference type="PANTHER" id="PTHR11766">
    <property type="entry name" value="TYROSYL-TRNA SYNTHETASE"/>
    <property type="match status" value="1"/>
</dbReference>
<dbReference type="Pfam" id="PF22421">
    <property type="entry name" value="SYY_C-terminal"/>
    <property type="match status" value="1"/>
</dbReference>
<dbReference type="Pfam" id="PF00579">
    <property type="entry name" value="tRNA-synt_1b"/>
    <property type="match status" value="1"/>
</dbReference>
<dbReference type="PRINTS" id="PR01040">
    <property type="entry name" value="TRNASYNTHTYR"/>
</dbReference>
<dbReference type="SMART" id="SM00363">
    <property type="entry name" value="S4"/>
    <property type="match status" value="1"/>
</dbReference>
<dbReference type="SUPFAM" id="SSF55174">
    <property type="entry name" value="Alpha-L RNA-binding motif"/>
    <property type="match status" value="1"/>
</dbReference>
<dbReference type="SUPFAM" id="SSF52374">
    <property type="entry name" value="Nucleotidylyl transferase"/>
    <property type="match status" value="1"/>
</dbReference>
<dbReference type="PROSITE" id="PS00178">
    <property type="entry name" value="AA_TRNA_LIGASE_I"/>
    <property type="match status" value="1"/>
</dbReference>
<dbReference type="PROSITE" id="PS50889">
    <property type="entry name" value="S4"/>
    <property type="match status" value="1"/>
</dbReference>
<evidence type="ECO:0000255" key="1">
    <source>
        <dbReference type="HAMAP-Rule" id="MF_02006"/>
    </source>
</evidence>
<comment type="function">
    <text evidence="1">Catalyzes the attachment of tyrosine to tRNA(Tyr) in a two-step reaction: tyrosine is first activated by ATP to form Tyr-AMP and then transferred to the acceptor end of tRNA(Tyr).</text>
</comment>
<comment type="catalytic activity">
    <reaction evidence="1">
        <text>tRNA(Tyr) + L-tyrosine + ATP = L-tyrosyl-tRNA(Tyr) + AMP + diphosphate + H(+)</text>
        <dbReference type="Rhea" id="RHEA:10220"/>
        <dbReference type="Rhea" id="RHEA-COMP:9706"/>
        <dbReference type="Rhea" id="RHEA-COMP:9707"/>
        <dbReference type="ChEBI" id="CHEBI:15378"/>
        <dbReference type="ChEBI" id="CHEBI:30616"/>
        <dbReference type="ChEBI" id="CHEBI:33019"/>
        <dbReference type="ChEBI" id="CHEBI:58315"/>
        <dbReference type="ChEBI" id="CHEBI:78442"/>
        <dbReference type="ChEBI" id="CHEBI:78536"/>
        <dbReference type="ChEBI" id="CHEBI:456215"/>
        <dbReference type="EC" id="6.1.1.1"/>
    </reaction>
</comment>
<comment type="subunit">
    <text evidence="1">Homodimer.</text>
</comment>
<comment type="subcellular location">
    <subcellularLocation>
        <location evidence="1">Cytoplasm</location>
    </subcellularLocation>
</comment>
<comment type="similarity">
    <text evidence="1">Belongs to the class-I aminoacyl-tRNA synthetase family. TyrS type 1 subfamily.</text>
</comment>
<feature type="chain" id="PRO_1000189329" description="Tyrosine--tRNA ligase">
    <location>
        <begin position="1"/>
        <end position="424"/>
    </location>
</feature>
<feature type="domain" description="S4 RNA-binding" evidence="1">
    <location>
        <begin position="357"/>
        <end position="414"/>
    </location>
</feature>
<feature type="short sequence motif" description="'HIGH' region">
    <location>
        <begin position="42"/>
        <end position="51"/>
    </location>
</feature>
<feature type="short sequence motif" description="'KMSKS' region">
    <location>
        <begin position="235"/>
        <end position="239"/>
    </location>
</feature>
<feature type="binding site" evidence="1">
    <location>
        <position position="37"/>
    </location>
    <ligand>
        <name>L-tyrosine</name>
        <dbReference type="ChEBI" id="CHEBI:58315"/>
    </ligand>
</feature>
<feature type="binding site" evidence="1">
    <location>
        <position position="175"/>
    </location>
    <ligand>
        <name>L-tyrosine</name>
        <dbReference type="ChEBI" id="CHEBI:58315"/>
    </ligand>
</feature>
<feature type="binding site" evidence="1">
    <location>
        <position position="179"/>
    </location>
    <ligand>
        <name>L-tyrosine</name>
        <dbReference type="ChEBI" id="CHEBI:58315"/>
    </ligand>
</feature>
<feature type="binding site" evidence="1">
    <location>
        <position position="238"/>
    </location>
    <ligand>
        <name>ATP</name>
        <dbReference type="ChEBI" id="CHEBI:30616"/>
    </ligand>
</feature>
<accession>B4TV08</accession>
<reference key="1">
    <citation type="journal article" date="2011" name="J. Bacteriol.">
        <title>Comparative genomics of 28 Salmonella enterica isolates: evidence for CRISPR-mediated adaptive sublineage evolution.</title>
        <authorList>
            <person name="Fricke W.F."/>
            <person name="Mammel M.K."/>
            <person name="McDermott P.F."/>
            <person name="Tartera C."/>
            <person name="White D.G."/>
            <person name="Leclerc J.E."/>
            <person name="Ravel J."/>
            <person name="Cebula T.A."/>
        </authorList>
    </citation>
    <scope>NUCLEOTIDE SEQUENCE [LARGE SCALE GENOMIC DNA]</scope>
    <source>
        <strain>CVM19633</strain>
    </source>
</reference>
<sequence length="424" mass="47282">MASSNLIKQLQERGLVAQVTDEDALAERLAQGPIALYCGFDPTADSLHLGHLVPLLCLKRFQQAGHKPVALVGGATGLIGDPSFKAAERKLNTEETVQEWVAKIRKQVAPFLDFDCGENSAIAANNYDWFGSMNVLTFLRDIGKHFSVNQMINKEAVKQRLNRDDQGISFTEFSYNLLQGYDFACLNKLHGVALQIGGSDQWGNITSGIDLTRRLHQNQVFGLTVPLITKADGTKFGKTEGGAVWLDPKKTSPYKFYQFWINTADADVYRFLKFFTFMDIEEINALEEEDKNSGKAPRAQYVLAEQVTRLVHGEEGLVAAKRITECLFSGSLSALSEADFEQLAQDGVPMVEMEKGADLMQALVDAELQPSRGQARKTIASNAVTINGEKQSDPEYIFNDEDRLFGRYTLLRRGKKNYCLICWK</sequence>
<keyword id="KW-0030">Aminoacyl-tRNA synthetase</keyword>
<keyword id="KW-0067">ATP-binding</keyword>
<keyword id="KW-0963">Cytoplasm</keyword>
<keyword id="KW-0436">Ligase</keyword>
<keyword id="KW-0547">Nucleotide-binding</keyword>
<keyword id="KW-0648">Protein biosynthesis</keyword>
<keyword id="KW-0694">RNA-binding</keyword>